<comment type="subcellular location">
    <subcellularLocation>
        <location evidence="3">Nucleus</location>
    </subcellularLocation>
</comment>
<evidence type="ECO:0000255" key="1">
    <source>
        <dbReference type="PROSITE-ProRule" id="PRU00108"/>
    </source>
</evidence>
<evidence type="ECO:0000256" key="2">
    <source>
        <dbReference type="SAM" id="MobiDB-lite"/>
    </source>
</evidence>
<evidence type="ECO:0000305" key="3"/>
<feature type="chain" id="PRO_0000048988" description="Homeobox protein ceh-13">
    <location>
        <begin position="1"/>
        <end position="202"/>
    </location>
</feature>
<feature type="DNA-binding region" description="Homeobox" evidence="1">
    <location>
        <begin position="114"/>
        <end position="173"/>
    </location>
</feature>
<feature type="region of interest" description="Disordered" evidence="2">
    <location>
        <begin position="60"/>
        <end position="83"/>
    </location>
</feature>
<feature type="region of interest" description="Disordered" evidence="2">
    <location>
        <begin position="166"/>
        <end position="202"/>
    </location>
</feature>
<feature type="compositionally biased region" description="Low complexity" evidence="2">
    <location>
        <begin position="63"/>
        <end position="81"/>
    </location>
</feature>
<feature type="compositionally biased region" description="Polar residues" evidence="2">
    <location>
        <begin position="183"/>
        <end position="194"/>
    </location>
</feature>
<protein>
    <recommendedName>
        <fullName>Homeobox protein ceh-13</fullName>
    </recommendedName>
</protein>
<dbReference type="EMBL" id="X17077">
    <property type="protein sequence ID" value="CAA34929.1"/>
    <property type="molecule type" value="Genomic_DNA"/>
</dbReference>
<dbReference type="EMBL" id="FO080424">
    <property type="protein sequence ID" value="CCD63600.1"/>
    <property type="molecule type" value="Genomic_DNA"/>
</dbReference>
<dbReference type="PIR" id="S09505">
    <property type="entry name" value="S09505"/>
</dbReference>
<dbReference type="RefSeq" id="NP_498655.1">
    <property type="nucleotide sequence ID" value="NM_066254.8"/>
</dbReference>
<dbReference type="SMR" id="P17488"/>
<dbReference type="BioGRID" id="41277">
    <property type="interactions" value="1"/>
</dbReference>
<dbReference type="FunCoup" id="P17488">
    <property type="interactions" value="66"/>
</dbReference>
<dbReference type="STRING" id="6239.R13A5.5.2"/>
<dbReference type="PaxDb" id="6239-R13A5.5"/>
<dbReference type="EnsemblMetazoa" id="R13A5.5.1">
    <property type="protein sequence ID" value="R13A5.5.1"/>
    <property type="gene ID" value="WBGene00000437"/>
</dbReference>
<dbReference type="GeneID" id="176069"/>
<dbReference type="KEGG" id="cel:CELE_R13A5.5"/>
<dbReference type="UCSC" id="R13A5.5">
    <property type="organism name" value="c. elegans"/>
</dbReference>
<dbReference type="AGR" id="WB:WBGene00000437"/>
<dbReference type="CTD" id="176069"/>
<dbReference type="WormBase" id="R13A5.5">
    <property type="protein sequence ID" value="CE28767"/>
    <property type="gene ID" value="WBGene00000437"/>
    <property type="gene designation" value="ceh-13"/>
</dbReference>
<dbReference type="eggNOG" id="KOG0489">
    <property type="taxonomic scope" value="Eukaryota"/>
</dbReference>
<dbReference type="GeneTree" id="ENSGT00970000196673"/>
<dbReference type="HOGENOM" id="CLU_096215_0_0_1"/>
<dbReference type="InParanoid" id="P17488"/>
<dbReference type="OMA" id="QHNTYKW"/>
<dbReference type="OrthoDB" id="6159439at2759"/>
<dbReference type="PhylomeDB" id="P17488"/>
<dbReference type="PRO" id="PR:P17488"/>
<dbReference type="Proteomes" id="UP000001940">
    <property type="component" value="Chromosome III"/>
</dbReference>
<dbReference type="Bgee" id="WBGene00000437">
    <property type="expression patterns" value="Expressed in embryonic cell and 34 other cell types or tissues"/>
</dbReference>
<dbReference type="GO" id="GO:0005737">
    <property type="term" value="C:cytoplasm"/>
    <property type="evidence" value="ECO:0000314"/>
    <property type="project" value="WormBase"/>
</dbReference>
<dbReference type="GO" id="GO:0005634">
    <property type="term" value="C:nucleus"/>
    <property type="evidence" value="ECO:0000314"/>
    <property type="project" value="WormBase"/>
</dbReference>
<dbReference type="GO" id="GO:0003700">
    <property type="term" value="F:DNA-binding transcription factor activity"/>
    <property type="evidence" value="ECO:0000250"/>
    <property type="project" value="WormBase"/>
</dbReference>
<dbReference type="GO" id="GO:0000981">
    <property type="term" value="F:DNA-binding transcription factor activity, RNA polymerase II-specific"/>
    <property type="evidence" value="ECO:0007669"/>
    <property type="project" value="InterPro"/>
</dbReference>
<dbReference type="GO" id="GO:0043565">
    <property type="term" value="F:sequence-specific DNA binding"/>
    <property type="evidence" value="ECO:0007669"/>
    <property type="project" value="InterPro"/>
</dbReference>
<dbReference type="GO" id="GO:0098609">
    <property type="term" value="P:cell-cell adhesion"/>
    <property type="evidence" value="ECO:0000315"/>
    <property type="project" value="WormBase"/>
</dbReference>
<dbReference type="GO" id="GO:0009792">
    <property type="term" value="P:embryo development ending in birth or egg hatching"/>
    <property type="evidence" value="ECO:0000315"/>
    <property type="project" value="WormBase"/>
</dbReference>
<dbReference type="CDD" id="cd00086">
    <property type="entry name" value="homeodomain"/>
    <property type="match status" value="1"/>
</dbReference>
<dbReference type="FunFam" id="1.10.10.60:FF:000113">
    <property type="entry name" value="homeobox protein Hox-B1"/>
    <property type="match status" value="1"/>
</dbReference>
<dbReference type="Gene3D" id="1.10.10.60">
    <property type="entry name" value="Homeodomain-like"/>
    <property type="match status" value="1"/>
</dbReference>
<dbReference type="InterPro" id="IPR001356">
    <property type="entry name" value="HD"/>
</dbReference>
<dbReference type="InterPro" id="IPR020479">
    <property type="entry name" value="HD_metazoa"/>
</dbReference>
<dbReference type="InterPro" id="IPR017970">
    <property type="entry name" value="Homeobox_CS"/>
</dbReference>
<dbReference type="InterPro" id="IPR009057">
    <property type="entry name" value="Homeodomain-like_sf"/>
</dbReference>
<dbReference type="InterPro" id="IPR046327">
    <property type="entry name" value="HXA1/B1/D1"/>
</dbReference>
<dbReference type="PANTHER" id="PTHR45946">
    <property type="entry name" value="HOMEOBOX PROTEIN ROUGH-RELATED"/>
    <property type="match status" value="1"/>
</dbReference>
<dbReference type="PANTHER" id="PTHR45946:SF4">
    <property type="entry name" value="HOMEOBOX PROTEIN ROUGH-RELATED"/>
    <property type="match status" value="1"/>
</dbReference>
<dbReference type="Pfam" id="PF00046">
    <property type="entry name" value="Homeodomain"/>
    <property type="match status" value="1"/>
</dbReference>
<dbReference type="PRINTS" id="PR00024">
    <property type="entry name" value="HOMEOBOX"/>
</dbReference>
<dbReference type="SMART" id="SM00389">
    <property type="entry name" value="HOX"/>
    <property type="match status" value="1"/>
</dbReference>
<dbReference type="SUPFAM" id="SSF46689">
    <property type="entry name" value="Homeodomain-like"/>
    <property type="match status" value="1"/>
</dbReference>
<dbReference type="PROSITE" id="PS00027">
    <property type="entry name" value="HOMEOBOX_1"/>
    <property type="match status" value="1"/>
</dbReference>
<dbReference type="PROSITE" id="PS50071">
    <property type="entry name" value="HOMEOBOX_2"/>
    <property type="match status" value="1"/>
</dbReference>
<accession>P17488</accession>
<keyword id="KW-0217">Developmental protein</keyword>
<keyword id="KW-0238">DNA-binding</keyword>
<keyword id="KW-0371">Homeobox</keyword>
<keyword id="KW-0539">Nucleus</keyword>
<keyword id="KW-1185">Reference proteome</keyword>
<sequence>MSSTECYGAPPHNYYQDWPTTHSYYPSVPSSYSPLNHHPADIWAAHPSNYIMGNGHVSPPATASGLSPPASRSSNSSAELPTGVTASQHNTYKWMHTKRSQRPAAPKKKVIDENGTNRTNFTTHQLTELEKEFHTAKYVNRTRRTEIASNLKLQEAQVKIWFQNRRMKEKKREKEKAFLARNTWESNSPTSSCSGEDVKNFK</sequence>
<reference key="1">
    <citation type="journal article" date="1999" name="Development">
        <title>Anterior organization of the Caenorhabditis elegans embryo by the labial-like Hox gene ceh-13.</title>
        <authorList>
            <person name="Brunschwig K."/>
            <person name="Wittmann C."/>
            <person name="Schnabel R."/>
            <person name="Buerglin T.R."/>
            <person name="Tobler H."/>
            <person name="Mueller F."/>
        </authorList>
    </citation>
    <scope>NUCLEOTIDE SEQUENCE [GENOMIC DNA]</scope>
    <source>
        <strain>Bristol N2</strain>
    </source>
</reference>
<reference key="2">
    <citation type="journal article" date="1998" name="Science">
        <title>Genome sequence of the nematode C. elegans: a platform for investigating biology.</title>
        <authorList>
            <consortium name="The C. elegans sequencing consortium"/>
        </authorList>
    </citation>
    <scope>NUCLEOTIDE SEQUENCE [LARGE SCALE GENOMIC DNA]</scope>
    <source>
        <strain>Bristol N2</strain>
    </source>
</reference>
<reference key="3">
    <citation type="journal article" date="1990" name="Nucleic Acids Res.">
        <title>Cloning and analysis of three new homeobox genes from the nematode Caenorhabditis elegans.</title>
        <authorList>
            <person name="Schaller D."/>
            <person name="Wittmann C."/>
            <person name="Spicher A."/>
            <person name="Mueller F."/>
            <person name="Tobler H."/>
        </authorList>
    </citation>
    <scope>PRELIMINARY PARTIAL NUCLEOTIDE SEQUENCE [GENOMIC DNA]</scope>
</reference>
<proteinExistence type="predicted"/>
<name>HM13_CAEEL</name>
<organism>
    <name type="scientific">Caenorhabditis elegans</name>
    <dbReference type="NCBI Taxonomy" id="6239"/>
    <lineage>
        <taxon>Eukaryota</taxon>
        <taxon>Metazoa</taxon>
        <taxon>Ecdysozoa</taxon>
        <taxon>Nematoda</taxon>
        <taxon>Chromadorea</taxon>
        <taxon>Rhabditida</taxon>
        <taxon>Rhabditina</taxon>
        <taxon>Rhabditomorpha</taxon>
        <taxon>Rhabditoidea</taxon>
        <taxon>Rhabditidae</taxon>
        <taxon>Peloderinae</taxon>
        <taxon>Caenorhabditis</taxon>
    </lineage>
</organism>
<gene>
    <name type="primary">ceh-13</name>
    <name type="ORF">R13A5.5</name>
</gene>